<dbReference type="EC" id="6.1.1.5" evidence="1"/>
<dbReference type="EMBL" id="CP000614">
    <property type="protein sequence ID" value="ABO55585.1"/>
    <property type="molecule type" value="Genomic_DNA"/>
</dbReference>
<dbReference type="SMR" id="A4JH32"/>
<dbReference type="KEGG" id="bvi:Bcep1808_2590"/>
<dbReference type="eggNOG" id="COG0060">
    <property type="taxonomic scope" value="Bacteria"/>
</dbReference>
<dbReference type="HOGENOM" id="CLU_001493_7_1_4"/>
<dbReference type="Proteomes" id="UP000002287">
    <property type="component" value="Chromosome 1"/>
</dbReference>
<dbReference type="GO" id="GO:0005829">
    <property type="term" value="C:cytosol"/>
    <property type="evidence" value="ECO:0007669"/>
    <property type="project" value="TreeGrafter"/>
</dbReference>
<dbReference type="GO" id="GO:0002161">
    <property type="term" value="F:aminoacyl-tRNA deacylase activity"/>
    <property type="evidence" value="ECO:0007669"/>
    <property type="project" value="InterPro"/>
</dbReference>
<dbReference type="GO" id="GO:0005524">
    <property type="term" value="F:ATP binding"/>
    <property type="evidence" value="ECO:0007669"/>
    <property type="project" value="UniProtKB-UniRule"/>
</dbReference>
<dbReference type="GO" id="GO:0004822">
    <property type="term" value="F:isoleucine-tRNA ligase activity"/>
    <property type="evidence" value="ECO:0007669"/>
    <property type="project" value="UniProtKB-UniRule"/>
</dbReference>
<dbReference type="GO" id="GO:0000049">
    <property type="term" value="F:tRNA binding"/>
    <property type="evidence" value="ECO:0007669"/>
    <property type="project" value="InterPro"/>
</dbReference>
<dbReference type="GO" id="GO:0008270">
    <property type="term" value="F:zinc ion binding"/>
    <property type="evidence" value="ECO:0007669"/>
    <property type="project" value="UniProtKB-UniRule"/>
</dbReference>
<dbReference type="GO" id="GO:0006428">
    <property type="term" value="P:isoleucyl-tRNA aminoacylation"/>
    <property type="evidence" value="ECO:0007669"/>
    <property type="project" value="UniProtKB-UniRule"/>
</dbReference>
<dbReference type="CDD" id="cd07960">
    <property type="entry name" value="Anticodon_Ia_Ile_BEm"/>
    <property type="match status" value="1"/>
</dbReference>
<dbReference type="CDD" id="cd00818">
    <property type="entry name" value="IleRS_core"/>
    <property type="match status" value="1"/>
</dbReference>
<dbReference type="FunFam" id="1.10.730.20:FF:000001">
    <property type="entry name" value="Isoleucine--tRNA ligase"/>
    <property type="match status" value="1"/>
</dbReference>
<dbReference type="FunFam" id="3.40.50.620:FF:000042">
    <property type="entry name" value="Isoleucine--tRNA ligase"/>
    <property type="match status" value="1"/>
</dbReference>
<dbReference type="FunFam" id="3.40.50.620:FF:000048">
    <property type="entry name" value="Isoleucine--tRNA ligase"/>
    <property type="match status" value="1"/>
</dbReference>
<dbReference type="Gene3D" id="1.10.730.20">
    <property type="match status" value="1"/>
</dbReference>
<dbReference type="Gene3D" id="3.40.50.620">
    <property type="entry name" value="HUPs"/>
    <property type="match status" value="2"/>
</dbReference>
<dbReference type="Gene3D" id="3.90.740.10">
    <property type="entry name" value="Valyl/Leucyl/Isoleucyl-tRNA synthetase, editing domain"/>
    <property type="match status" value="1"/>
</dbReference>
<dbReference type="HAMAP" id="MF_02002">
    <property type="entry name" value="Ile_tRNA_synth_type1"/>
    <property type="match status" value="1"/>
</dbReference>
<dbReference type="InterPro" id="IPR001412">
    <property type="entry name" value="aa-tRNA-synth_I_CS"/>
</dbReference>
<dbReference type="InterPro" id="IPR002300">
    <property type="entry name" value="aa-tRNA-synth_Ia"/>
</dbReference>
<dbReference type="InterPro" id="IPR033708">
    <property type="entry name" value="Anticodon_Ile_BEm"/>
</dbReference>
<dbReference type="InterPro" id="IPR002301">
    <property type="entry name" value="Ile-tRNA-ligase"/>
</dbReference>
<dbReference type="InterPro" id="IPR023585">
    <property type="entry name" value="Ile-tRNA-ligase_type1"/>
</dbReference>
<dbReference type="InterPro" id="IPR050081">
    <property type="entry name" value="Ile-tRNA_ligase"/>
</dbReference>
<dbReference type="InterPro" id="IPR013155">
    <property type="entry name" value="M/V/L/I-tRNA-synth_anticd-bd"/>
</dbReference>
<dbReference type="InterPro" id="IPR014729">
    <property type="entry name" value="Rossmann-like_a/b/a_fold"/>
</dbReference>
<dbReference type="InterPro" id="IPR009080">
    <property type="entry name" value="tRNAsynth_Ia_anticodon-bd"/>
</dbReference>
<dbReference type="InterPro" id="IPR009008">
    <property type="entry name" value="Val/Leu/Ile-tRNA-synth_edit"/>
</dbReference>
<dbReference type="InterPro" id="IPR010663">
    <property type="entry name" value="Znf_FPG/IleRS"/>
</dbReference>
<dbReference type="NCBIfam" id="TIGR00392">
    <property type="entry name" value="ileS"/>
    <property type="match status" value="1"/>
</dbReference>
<dbReference type="PANTHER" id="PTHR42765:SF1">
    <property type="entry name" value="ISOLEUCINE--TRNA LIGASE, MITOCHONDRIAL"/>
    <property type="match status" value="1"/>
</dbReference>
<dbReference type="PANTHER" id="PTHR42765">
    <property type="entry name" value="SOLEUCYL-TRNA SYNTHETASE"/>
    <property type="match status" value="1"/>
</dbReference>
<dbReference type="Pfam" id="PF08264">
    <property type="entry name" value="Anticodon_1"/>
    <property type="match status" value="1"/>
</dbReference>
<dbReference type="Pfam" id="PF00133">
    <property type="entry name" value="tRNA-synt_1"/>
    <property type="match status" value="1"/>
</dbReference>
<dbReference type="Pfam" id="PF06827">
    <property type="entry name" value="zf-FPG_IleRS"/>
    <property type="match status" value="1"/>
</dbReference>
<dbReference type="PRINTS" id="PR00984">
    <property type="entry name" value="TRNASYNTHILE"/>
</dbReference>
<dbReference type="SUPFAM" id="SSF47323">
    <property type="entry name" value="Anticodon-binding domain of a subclass of class I aminoacyl-tRNA synthetases"/>
    <property type="match status" value="1"/>
</dbReference>
<dbReference type="SUPFAM" id="SSF52374">
    <property type="entry name" value="Nucleotidylyl transferase"/>
    <property type="match status" value="1"/>
</dbReference>
<dbReference type="SUPFAM" id="SSF50677">
    <property type="entry name" value="ValRS/IleRS/LeuRS editing domain"/>
    <property type="match status" value="1"/>
</dbReference>
<dbReference type="PROSITE" id="PS00178">
    <property type="entry name" value="AA_TRNA_LIGASE_I"/>
    <property type="match status" value="1"/>
</dbReference>
<feature type="chain" id="PRO_1000022050" description="Isoleucine--tRNA ligase">
    <location>
        <begin position="1"/>
        <end position="945"/>
    </location>
</feature>
<feature type="short sequence motif" description="'HIGH' region">
    <location>
        <begin position="66"/>
        <end position="76"/>
    </location>
</feature>
<feature type="short sequence motif" description="'KMSKS' region">
    <location>
        <begin position="622"/>
        <end position="626"/>
    </location>
</feature>
<feature type="binding site" evidence="1">
    <location>
        <position position="581"/>
    </location>
    <ligand>
        <name>L-isoleucyl-5'-AMP</name>
        <dbReference type="ChEBI" id="CHEBI:178002"/>
    </ligand>
</feature>
<feature type="binding site" evidence="1">
    <location>
        <position position="625"/>
    </location>
    <ligand>
        <name>ATP</name>
        <dbReference type="ChEBI" id="CHEBI:30616"/>
    </ligand>
</feature>
<feature type="binding site" evidence="1">
    <location>
        <position position="908"/>
    </location>
    <ligand>
        <name>Zn(2+)</name>
        <dbReference type="ChEBI" id="CHEBI:29105"/>
    </ligand>
</feature>
<feature type="binding site" evidence="1">
    <location>
        <position position="911"/>
    </location>
    <ligand>
        <name>Zn(2+)</name>
        <dbReference type="ChEBI" id="CHEBI:29105"/>
    </ligand>
</feature>
<feature type="binding site" evidence="1">
    <location>
        <position position="928"/>
    </location>
    <ligand>
        <name>Zn(2+)</name>
        <dbReference type="ChEBI" id="CHEBI:29105"/>
    </ligand>
</feature>
<feature type="binding site" evidence="1">
    <location>
        <position position="931"/>
    </location>
    <ligand>
        <name>Zn(2+)</name>
        <dbReference type="ChEBI" id="CHEBI:29105"/>
    </ligand>
</feature>
<organism>
    <name type="scientific">Burkholderia vietnamiensis (strain G4 / LMG 22486)</name>
    <name type="common">Burkholderia cepacia (strain R1808)</name>
    <dbReference type="NCBI Taxonomy" id="269482"/>
    <lineage>
        <taxon>Bacteria</taxon>
        <taxon>Pseudomonadati</taxon>
        <taxon>Pseudomonadota</taxon>
        <taxon>Betaproteobacteria</taxon>
        <taxon>Burkholderiales</taxon>
        <taxon>Burkholderiaceae</taxon>
        <taxon>Burkholderia</taxon>
        <taxon>Burkholderia cepacia complex</taxon>
    </lineage>
</organism>
<name>SYI_BURVG</name>
<sequence>MSNKKADSKPQAKYPVNLLDTPFPMRGDLPKREPQWVKEWEERGIYEKIRAASKGRPKFILHDGPPYANGDIHLGHAVNKILKDIVVKSRNMAGFDAPYVPGWDCHGMPIEIQIEKQFGKSLPAAEVMSKARAYATEQIEKQKVGFKRLGVLGDWANPYKTMNFVNEAEEIRALGKIIEKGYVYRGLKPVNWCFDCGSALAEAEVEYKDRTDPTIDVMFAFAEPEKTAQAFGLPALPRADGGIVIWTTTPWTIPANQALNLHPEIVYALVDTERGLLIIAEERVEACMADFKLTGRIVATAPGVKLANLRFHHPLASAHPGYKRTAPVYLGDYVTTDTGTGVVHSSPAYGIEDFVSCKSHGMTDSDIINPVMGDGRYIESLPLFGGLSIWDANPKVVEALRAAGSLLRSEKYTHSYMHCWRHKTPIIYRATSQWFAGMDVTPHAGGKTLRETALEGIDATAFYPSWGKQRLFSMIANRPDWTLSRQRQWGVPMAFFVHKETGELHPRTLELLEEVAKRVEQSGIEAWQSLDPRELIGDDANLYEKNRDTLDVWFDSGTTHWHVLRGSHKDQLQFPADLYLEGSDQHRGWFHSSLLTASMIDGRAPYKGLLTHGFTVDGEGRKMSKSLGNGIDPHEVANRLGAEIIRLWIASTDYSGELAISEEILKRVTEGYRRIRNTLRFLLANLSDFDFAQHAVPVDEWLEIDRYAVAFSAQLQTELLGHYEKYEFHPVVAKLQTYCSEDLGGFYLDVLKDRLYTSAADSRARRSAQTALYHLTQGLLRVLAPFLSFTAEEAWKVFQPASDTVFTETYYAYPEVAGAAALIEKWALLRDVRGNVTKALEEARTANRIGSSLQAEVAVHASGARYDALTSLGDDLKFVLITSAASVVKVDDEAHESVDVAASKYQKCERCWHYREDVGAHAEHPTLCGRCFSNLFENGEIRSAA</sequence>
<gene>
    <name evidence="1" type="primary">ileS</name>
    <name type="ordered locus">Bcep1808_2590</name>
</gene>
<comment type="function">
    <text evidence="1">Catalyzes the attachment of isoleucine to tRNA(Ile). As IleRS can inadvertently accommodate and process structurally similar amino acids such as valine, to avoid such errors it has two additional distinct tRNA(Ile)-dependent editing activities. One activity is designated as 'pretransfer' editing and involves the hydrolysis of activated Val-AMP. The other activity is designated 'posttransfer' editing and involves deacylation of mischarged Val-tRNA(Ile).</text>
</comment>
<comment type="catalytic activity">
    <reaction evidence="1">
        <text>tRNA(Ile) + L-isoleucine + ATP = L-isoleucyl-tRNA(Ile) + AMP + diphosphate</text>
        <dbReference type="Rhea" id="RHEA:11060"/>
        <dbReference type="Rhea" id="RHEA-COMP:9666"/>
        <dbReference type="Rhea" id="RHEA-COMP:9695"/>
        <dbReference type="ChEBI" id="CHEBI:30616"/>
        <dbReference type="ChEBI" id="CHEBI:33019"/>
        <dbReference type="ChEBI" id="CHEBI:58045"/>
        <dbReference type="ChEBI" id="CHEBI:78442"/>
        <dbReference type="ChEBI" id="CHEBI:78528"/>
        <dbReference type="ChEBI" id="CHEBI:456215"/>
        <dbReference type="EC" id="6.1.1.5"/>
    </reaction>
</comment>
<comment type="cofactor">
    <cofactor evidence="1">
        <name>Zn(2+)</name>
        <dbReference type="ChEBI" id="CHEBI:29105"/>
    </cofactor>
    <text evidence="1">Binds 1 zinc ion per subunit.</text>
</comment>
<comment type="subunit">
    <text evidence="1">Monomer.</text>
</comment>
<comment type="subcellular location">
    <subcellularLocation>
        <location evidence="1">Cytoplasm</location>
    </subcellularLocation>
</comment>
<comment type="domain">
    <text evidence="1">IleRS has two distinct active sites: one for aminoacylation and one for editing. The misactivated valine is translocated from the active site to the editing site, which sterically excludes the correctly activated isoleucine. The single editing site contains two valyl binding pockets, one specific for each substrate (Val-AMP or Val-tRNA(Ile)).</text>
</comment>
<comment type="similarity">
    <text evidence="1">Belongs to the class-I aminoacyl-tRNA synthetase family. IleS type 1 subfamily.</text>
</comment>
<reference key="1">
    <citation type="submission" date="2007-03" db="EMBL/GenBank/DDBJ databases">
        <title>Complete sequence of chromosome 1 of Burkholderia vietnamiensis G4.</title>
        <authorList>
            <consortium name="US DOE Joint Genome Institute"/>
            <person name="Copeland A."/>
            <person name="Lucas S."/>
            <person name="Lapidus A."/>
            <person name="Barry K."/>
            <person name="Detter J.C."/>
            <person name="Glavina del Rio T."/>
            <person name="Hammon N."/>
            <person name="Israni S."/>
            <person name="Dalin E."/>
            <person name="Tice H."/>
            <person name="Pitluck S."/>
            <person name="Chain P."/>
            <person name="Malfatti S."/>
            <person name="Shin M."/>
            <person name="Vergez L."/>
            <person name="Schmutz J."/>
            <person name="Larimer F."/>
            <person name="Land M."/>
            <person name="Hauser L."/>
            <person name="Kyrpides N."/>
            <person name="Tiedje J."/>
            <person name="Richardson P."/>
        </authorList>
    </citation>
    <scope>NUCLEOTIDE SEQUENCE [LARGE SCALE GENOMIC DNA]</scope>
    <source>
        <strain>G4 / LMG 22486</strain>
    </source>
</reference>
<proteinExistence type="inferred from homology"/>
<evidence type="ECO:0000255" key="1">
    <source>
        <dbReference type="HAMAP-Rule" id="MF_02002"/>
    </source>
</evidence>
<keyword id="KW-0030">Aminoacyl-tRNA synthetase</keyword>
<keyword id="KW-0067">ATP-binding</keyword>
<keyword id="KW-0963">Cytoplasm</keyword>
<keyword id="KW-0436">Ligase</keyword>
<keyword id="KW-0479">Metal-binding</keyword>
<keyword id="KW-0547">Nucleotide-binding</keyword>
<keyword id="KW-0648">Protein biosynthesis</keyword>
<keyword id="KW-0862">Zinc</keyword>
<accession>A4JH32</accession>
<protein>
    <recommendedName>
        <fullName evidence="1">Isoleucine--tRNA ligase</fullName>
        <ecNumber evidence="1">6.1.1.5</ecNumber>
    </recommendedName>
    <alternativeName>
        <fullName evidence="1">Isoleucyl-tRNA synthetase</fullName>
        <shortName evidence="1">IleRS</shortName>
    </alternativeName>
</protein>